<accession>P80473</accession>
<gene>
    <name type="primary">MYOM1</name>
</gene>
<sequence length="340" mass="37307">QSMSTLHQEEAFEKADQLSLKKTLEETEAFHKKLNEDHLLHAPEPVIKPGTAYKNQVPINVQAHPGKYIIESRYGVHTLEINDDTRFHSGASTLPPSXYASRFEIHFQPEIQXYRNGVPIDAEXXGAPAIPKYNDYIIITXKQPAVDGGSPILGYFIDVGIGXPSRVSEPVAALDPAEKARLKSRPSAPXTGQIIVTEEEPSEEAGTENXQRVNTELPVKXSNNAGVXEPEETGGAEITGYYVNYREVIDGVPGRXREANIKAISDEAYKXEEXTIAVPGPPHMTFKNRARVVGGLPDVVTIQEGKLLASDEHXNLKYGSEISDFTVSVFIPEEEARSVA</sequence>
<reference key="1">
    <citation type="journal article" date="1995" name="Eur. J. Biochem.">
        <title>Purification and biochemical characterization of myomesin, a myosin-binding and titin-binding protein, from bovine skeletal muscle.</title>
        <authorList>
            <person name="Obermann W.M.J."/>
            <person name="Plessmann U."/>
            <person name="Weber K."/>
            <person name="Fuerst D.O."/>
        </authorList>
    </citation>
    <scope>PROTEIN SEQUENCE</scope>
    <source>
        <tissue>Skeletal muscle</tissue>
    </source>
</reference>
<feature type="chain" id="PRO_0000096671" description="Myomesin-1">
    <location>
        <begin position="1" status="less than"/>
        <end position="340" status="greater than"/>
    </location>
</feature>
<feature type="region of interest" description="Disordered" evidence="2">
    <location>
        <begin position="177"/>
        <end position="212"/>
    </location>
</feature>
<feature type="compositionally biased region" description="Acidic residues" evidence="2">
    <location>
        <begin position="197"/>
        <end position="206"/>
    </location>
</feature>
<feature type="non-consecutive residues" evidence="3">
    <location>
        <begin position="14"/>
        <end position="15"/>
    </location>
</feature>
<feature type="non-consecutive residues" evidence="3">
    <location>
        <begin position="49"/>
        <end position="50"/>
    </location>
</feature>
<feature type="non-consecutive residues" evidence="3">
    <location>
        <begin position="82"/>
        <end position="83"/>
    </location>
</feature>
<feature type="non-consecutive residues" evidence="3">
    <location>
        <begin position="105"/>
        <end position="106"/>
    </location>
</feature>
<feature type="non-consecutive residues" evidence="3">
    <location>
        <begin position="120"/>
        <end position="121"/>
    </location>
</feature>
<feature type="non-consecutive residues" evidence="3">
    <location>
        <begin position="134"/>
        <end position="135"/>
    </location>
</feature>
<feature type="non-consecutive residues" evidence="3">
    <location>
        <begin position="158"/>
        <end position="159"/>
    </location>
</feature>
<feature type="non-consecutive residues" evidence="3">
    <location>
        <begin position="203"/>
        <end position="204"/>
    </location>
</feature>
<feature type="non-consecutive residues" evidence="3">
    <location>
        <begin position="220"/>
        <end position="221"/>
    </location>
</feature>
<feature type="non-consecutive residues" evidence="3">
    <location>
        <begin position="232"/>
        <end position="233"/>
    </location>
</feature>
<feature type="non-consecutive residues" evidence="3">
    <location>
        <begin position="270"/>
        <end position="271"/>
    </location>
</feature>
<feature type="non-consecutive residues" evidence="3">
    <location>
        <begin position="283"/>
        <end position="284"/>
    </location>
</feature>
<feature type="non-consecutive residues" evidence="3">
    <location>
        <begin position="287"/>
        <end position="288"/>
    </location>
</feature>
<feature type="non-consecutive residues" evidence="3">
    <location>
        <begin position="306"/>
        <end position="307"/>
    </location>
</feature>
<feature type="non-consecutive residues" evidence="3">
    <location>
        <begin position="317"/>
        <end position="318"/>
    </location>
</feature>
<feature type="non-terminal residue">
    <location>
        <position position="1"/>
    </location>
</feature>
<feature type="non-terminal residue">
    <location>
        <position position="340"/>
    </location>
</feature>
<protein>
    <recommendedName>
        <fullName>Myomesin-1</fullName>
    </recommendedName>
    <alternativeName>
        <fullName>190 kDa titin-associated protein</fullName>
    </alternativeName>
    <alternativeName>
        <fullName>Myomesin family member 1</fullName>
    </alternativeName>
</protein>
<evidence type="ECO:0000250" key="1"/>
<evidence type="ECO:0000256" key="2">
    <source>
        <dbReference type="SAM" id="MobiDB-lite"/>
    </source>
</evidence>
<evidence type="ECO:0000305" key="3"/>
<proteinExistence type="evidence at protein level"/>
<keyword id="KW-0963">Cytoplasm</keyword>
<keyword id="KW-0903">Direct protein sequencing</keyword>
<keyword id="KW-0514">Muscle protein</keyword>
<keyword id="KW-1185">Reference proteome</keyword>
<dbReference type="FunCoup" id="P80473">
    <property type="interactions" value="4"/>
</dbReference>
<dbReference type="InParanoid" id="P80473"/>
<dbReference type="OrthoDB" id="8776562at2759"/>
<dbReference type="Proteomes" id="UP000009136">
    <property type="component" value="Unplaced"/>
</dbReference>
<dbReference type="GO" id="GO:0031430">
    <property type="term" value="C:M band"/>
    <property type="evidence" value="ECO:0000314"/>
    <property type="project" value="CAFA"/>
</dbReference>
<dbReference type="GO" id="GO:0042803">
    <property type="term" value="F:protein homodimerization activity"/>
    <property type="evidence" value="ECO:0000250"/>
    <property type="project" value="UniProtKB"/>
</dbReference>
<organism>
    <name type="scientific">Bos taurus</name>
    <name type="common">Bovine</name>
    <dbReference type="NCBI Taxonomy" id="9913"/>
    <lineage>
        <taxon>Eukaryota</taxon>
        <taxon>Metazoa</taxon>
        <taxon>Chordata</taxon>
        <taxon>Craniata</taxon>
        <taxon>Vertebrata</taxon>
        <taxon>Euteleostomi</taxon>
        <taxon>Mammalia</taxon>
        <taxon>Eutheria</taxon>
        <taxon>Laurasiatheria</taxon>
        <taxon>Artiodactyla</taxon>
        <taxon>Ruminantia</taxon>
        <taxon>Pecora</taxon>
        <taxon>Bovidae</taxon>
        <taxon>Bovinae</taxon>
        <taxon>Bos</taxon>
    </lineage>
</organism>
<name>MYOM1_BOVIN</name>
<comment type="function">
    <text>Major component of the vertebrate myofibrillar M band. Binds myosin, titin, and light meromyosin. This binding is dose dependent.</text>
</comment>
<comment type="subunit">
    <text evidence="1">Homodimer. Interacts with TTN/titin and PNKD.</text>
</comment>
<comment type="subcellular location">
    <subcellularLocation>
        <location evidence="1">Cytoplasm</location>
        <location evidence="1">Myofibril</location>
        <location evidence="1">Sarcomere</location>
        <location evidence="1">M line</location>
    </subcellularLocation>
</comment>
<comment type="tissue specificity">
    <text>Seems to be expressed in all cardiac and skeletal fibers.</text>
</comment>